<reference key="1">
    <citation type="journal article" date="2003" name="Nature">
        <title>The genome sequence of Bacillus anthracis Ames and comparison to closely related bacteria.</title>
        <authorList>
            <person name="Read T.D."/>
            <person name="Peterson S.N."/>
            <person name="Tourasse N.J."/>
            <person name="Baillie L.W."/>
            <person name="Paulsen I.T."/>
            <person name="Nelson K.E."/>
            <person name="Tettelin H."/>
            <person name="Fouts D.E."/>
            <person name="Eisen J.A."/>
            <person name="Gill S.R."/>
            <person name="Holtzapple E.K."/>
            <person name="Okstad O.A."/>
            <person name="Helgason E."/>
            <person name="Rilstone J."/>
            <person name="Wu M."/>
            <person name="Kolonay J.F."/>
            <person name="Beanan M.J."/>
            <person name="Dodson R.J."/>
            <person name="Brinkac L.M."/>
            <person name="Gwinn M.L."/>
            <person name="DeBoy R.T."/>
            <person name="Madpu R."/>
            <person name="Daugherty S.C."/>
            <person name="Durkin A.S."/>
            <person name="Haft D.H."/>
            <person name="Nelson W.C."/>
            <person name="Peterson J.D."/>
            <person name="Pop M."/>
            <person name="Khouri H.M."/>
            <person name="Radune D."/>
            <person name="Benton J.L."/>
            <person name="Mahamoud Y."/>
            <person name="Jiang L."/>
            <person name="Hance I.R."/>
            <person name="Weidman J.F."/>
            <person name="Berry K.J."/>
            <person name="Plaut R.D."/>
            <person name="Wolf A.M."/>
            <person name="Watkins K.L."/>
            <person name="Nierman W.C."/>
            <person name="Hazen A."/>
            <person name="Cline R.T."/>
            <person name="Redmond C."/>
            <person name="Thwaite J.E."/>
            <person name="White O."/>
            <person name="Salzberg S.L."/>
            <person name="Thomason B."/>
            <person name="Friedlander A.M."/>
            <person name="Koehler T.M."/>
            <person name="Hanna P.C."/>
            <person name="Kolstoe A.-B."/>
            <person name="Fraser C.M."/>
        </authorList>
    </citation>
    <scope>NUCLEOTIDE SEQUENCE [LARGE SCALE GENOMIC DNA]</scope>
    <source>
        <strain>Ames / isolate Porton</strain>
    </source>
</reference>
<reference key="2">
    <citation type="journal article" date="2009" name="J. Bacteriol.">
        <title>The complete genome sequence of Bacillus anthracis Ames 'Ancestor'.</title>
        <authorList>
            <person name="Ravel J."/>
            <person name="Jiang L."/>
            <person name="Stanley S.T."/>
            <person name="Wilson M.R."/>
            <person name="Decker R.S."/>
            <person name="Read T.D."/>
            <person name="Worsham P."/>
            <person name="Keim P.S."/>
            <person name="Salzberg S.L."/>
            <person name="Fraser-Liggett C.M."/>
            <person name="Rasko D.A."/>
        </authorList>
    </citation>
    <scope>NUCLEOTIDE SEQUENCE [LARGE SCALE GENOMIC DNA]</scope>
    <source>
        <strain>Ames ancestor</strain>
    </source>
</reference>
<reference key="3">
    <citation type="submission" date="2004-01" db="EMBL/GenBank/DDBJ databases">
        <title>Complete genome sequence of Bacillus anthracis Sterne.</title>
        <authorList>
            <person name="Brettin T.S."/>
            <person name="Bruce D."/>
            <person name="Challacombe J.F."/>
            <person name="Gilna P."/>
            <person name="Han C."/>
            <person name="Hill K."/>
            <person name="Hitchcock P."/>
            <person name="Jackson P."/>
            <person name="Keim P."/>
            <person name="Longmire J."/>
            <person name="Lucas S."/>
            <person name="Okinaka R."/>
            <person name="Richardson P."/>
            <person name="Rubin E."/>
            <person name="Tice H."/>
        </authorList>
    </citation>
    <scope>NUCLEOTIDE SEQUENCE [LARGE SCALE GENOMIC DNA]</scope>
    <source>
        <strain>Sterne</strain>
    </source>
</reference>
<comment type="function">
    <text evidence="1">Key enzyme in the regulation of glycerol uptake and metabolism. Catalyzes the phosphorylation of glycerol to yield sn-glycerol 3-phosphate.</text>
</comment>
<comment type="catalytic activity">
    <reaction evidence="1">
        <text>glycerol + ATP = sn-glycerol 3-phosphate + ADP + H(+)</text>
        <dbReference type="Rhea" id="RHEA:21644"/>
        <dbReference type="ChEBI" id="CHEBI:15378"/>
        <dbReference type="ChEBI" id="CHEBI:17754"/>
        <dbReference type="ChEBI" id="CHEBI:30616"/>
        <dbReference type="ChEBI" id="CHEBI:57597"/>
        <dbReference type="ChEBI" id="CHEBI:456216"/>
        <dbReference type="EC" id="2.7.1.30"/>
    </reaction>
</comment>
<comment type="activity regulation">
    <text evidence="1">Activated by phosphorylation and inhibited by fructose 1,6-bisphosphate (FBP).</text>
</comment>
<comment type="pathway">
    <text evidence="1">Polyol metabolism; glycerol degradation via glycerol kinase pathway; sn-glycerol 3-phosphate from glycerol: step 1/1.</text>
</comment>
<comment type="subunit">
    <text evidence="1">Homotetramer and homodimer (in equilibrium).</text>
</comment>
<comment type="PTM">
    <text evidence="1">The phosphoenolpyruvate-dependent sugar phosphotransferase system (PTS), including enzyme I, and histidine-containing protein (HPr) are required for the phosphorylation, which leads to the activation of the enzyme.</text>
</comment>
<comment type="similarity">
    <text evidence="1">Belongs to the FGGY kinase family.</text>
</comment>
<dbReference type="EC" id="2.7.1.30" evidence="1"/>
<dbReference type="EMBL" id="AE016879">
    <property type="protein sequence ID" value="AAP25013.1"/>
    <property type="molecule type" value="Genomic_DNA"/>
</dbReference>
<dbReference type="EMBL" id="AE017334">
    <property type="protein sequence ID" value="AAT30129.1"/>
    <property type="molecule type" value="Genomic_DNA"/>
</dbReference>
<dbReference type="EMBL" id="AE017225">
    <property type="protein sequence ID" value="AAT53285.1"/>
    <property type="molecule type" value="Genomic_DNA"/>
</dbReference>
<dbReference type="RefSeq" id="NP_843527.1">
    <property type="nucleotide sequence ID" value="NC_003997.3"/>
</dbReference>
<dbReference type="RefSeq" id="WP_000759993.1">
    <property type="nucleotide sequence ID" value="NZ_WXXJ01000044.1"/>
</dbReference>
<dbReference type="RefSeq" id="YP_027234.1">
    <property type="nucleotide sequence ID" value="NC_005945.1"/>
</dbReference>
<dbReference type="SMR" id="Q81U58"/>
<dbReference type="IntAct" id="Q81U58">
    <property type="interactions" value="2"/>
</dbReference>
<dbReference type="STRING" id="261594.GBAA_1026"/>
<dbReference type="DNASU" id="1088947"/>
<dbReference type="GeneID" id="45021064"/>
<dbReference type="KEGG" id="ban:BA_1026"/>
<dbReference type="KEGG" id="bar:GBAA_1026"/>
<dbReference type="KEGG" id="bat:BAS0960"/>
<dbReference type="PATRIC" id="fig|198094.11.peg.1017"/>
<dbReference type="eggNOG" id="COG0554">
    <property type="taxonomic scope" value="Bacteria"/>
</dbReference>
<dbReference type="HOGENOM" id="CLU_009281_2_3_9"/>
<dbReference type="OMA" id="FMLMNIG"/>
<dbReference type="OrthoDB" id="9805576at2"/>
<dbReference type="UniPathway" id="UPA00618">
    <property type="reaction ID" value="UER00672"/>
</dbReference>
<dbReference type="Proteomes" id="UP000000427">
    <property type="component" value="Chromosome"/>
</dbReference>
<dbReference type="Proteomes" id="UP000000594">
    <property type="component" value="Chromosome"/>
</dbReference>
<dbReference type="GO" id="GO:0005829">
    <property type="term" value="C:cytosol"/>
    <property type="evidence" value="ECO:0007669"/>
    <property type="project" value="TreeGrafter"/>
</dbReference>
<dbReference type="GO" id="GO:0005524">
    <property type="term" value="F:ATP binding"/>
    <property type="evidence" value="ECO:0007669"/>
    <property type="project" value="UniProtKB-UniRule"/>
</dbReference>
<dbReference type="GO" id="GO:0004370">
    <property type="term" value="F:glycerol kinase activity"/>
    <property type="evidence" value="ECO:0000250"/>
    <property type="project" value="UniProtKB"/>
</dbReference>
<dbReference type="GO" id="GO:0019563">
    <property type="term" value="P:glycerol catabolic process"/>
    <property type="evidence" value="ECO:0007669"/>
    <property type="project" value="UniProtKB-UniRule"/>
</dbReference>
<dbReference type="GO" id="GO:0006071">
    <property type="term" value="P:glycerol metabolic process"/>
    <property type="evidence" value="ECO:0000250"/>
    <property type="project" value="UniProtKB"/>
</dbReference>
<dbReference type="GO" id="GO:0006072">
    <property type="term" value="P:glycerol-3-phosphate metabolic process"/>
    <property type="evidence" value="ECO:0007669"/>
    <property type="project" value="InterPro"/>
</dbReference>
<dbReference type="CDD" id="cd07786">
    <property type="entry name" value="FGGY_EcGK_like"/>
    <property type="match status" value="1"/>
</dbReference>
<dbReference type="FunFam" id="3.30.420.40:FF:000007">
    <property type="entry name" value="Glycerol kinase"/>
    <property type="match status" value="1"/>
</dbReference>
<dbReference type="FunFam" id="3.30.420.40:FF:000008">
    <property type="entry name" value="Glycerol kinase"/>
    <property type="match status" value="1"/>
</dbReference>
<dbReference type="Gene3D" id="3.30.420.40">
    <property type="match status" value="2"/>
</dbReference>
<dbReference type="HAMAP" id="MF_00186">
    <property type="entry name" value="Glycerol_kin"/>
    <property type="match status" value="1"/>
</dbReference>
<dbReference type="InterPro" id="IPR043129">
    <property type="entry name" value="ATPase_NBD"/>
</dbReference>
<dbReference type="InterPro" id="IPR000577">
    <property type="entry name" value="Carb_kinase_FGGY"/>
</dbReference>
<dbReference type="InterPro" id="IPR018483">
    <property type="entry name" value="Carb_kinase_FGGY_CS"/>
</dbReference>
<dbReference type="InterPro" id="IPR018485">
    <property type="entry name" value="FGGY_C"/>
</dbReference>
<dbReference type="InterPro" id="IPR018484">
    <property type="entry name" value="FGGY_N"/>
</dbReference>
<dbReference type="InterPro" id="IPR005999">
    <property type="entry name" value="Glycerol_kin"/>
</dbReference>
<dbReference type="NCBIfam" id="TIGR01311">
    <property type="entry name" value="glycerol_kin"/>
    <property type="match status" value="1"/>
</dbReference>
<dbReference type="NCBIfam" id="NF000756">
    <property type="entry name" value="PRK00047.1"/>
    <property type="match status" value="1"/>
</dbReference>
<dbReference type="PANTHER" id="PTHR10196:SF69">
    <property type="entry name" value="GLYCEROL KINASE"/>
    <property type="match status" value="1"/>
</dbReference>
<dbReference type="PANTHER" id="PTHR10196">
    <property type="entry name" value="SUGAR KINASE"/>
    <property type="match status" value="1"/>
</dbReference>
<dbReference type="Pfam" id="PF02782">
    <property type="entry name" value="FGGY_C"/>
    <property type="match status" value="1"/>
</dbReference>
<dbReference type="Pfam" id="PF00370">
    <property type="entry name" value="FGGY_N"/>
    <property type="match status" value="1"/>
</dbReference>
<dbReference type="PIRSF" id="PIRSF000538">
    <property type="entry name" value="GlpK"/>
    <property type="match status" value="1"/>
</dbReference>
<dbReference type="SUPFAM" id="SSF53067">
    <property type="entry name" value="Actin-like ATPase domain"/>
    <property type="match status" value="2"/>
</dbReference>
<dbReference type="PROSITE" id="PS00933">
    <property type="entry name" value="FGGY_KINASES_1"/>
    <property type="match status" value="1"/>
</dbReference>
<dbReference type="PROSITE" id="PS00445">
    <property type="entry name" value="FGGY_KINASES_2"/>
    <property type="match status" value="1"/>
</dbReference>
<evidence type="ECO:0000255" key="1">
    <source>
        <dbReference type="HAMAP-Rule" id="MF_00186"/>
    </source>
</evidence>
<accession>Q81U58</accession>
<accession>Q6I2E6</accession>
<accession>Q6KW74</accession>
<feature type="chain" id="PRO_0000059431" description="Glycerol kinase">
    <location>
        <begin position="1"/>
        <end position="496"/>
    </location>
</feature>
<feature type="binding site" evidence="1">
    <location>
        <position position="12"/>
    </location>
    <ligand>
        <name>ADP</name>
        <dbReference type="ChEBI" id="CHEBI:456216"/>
    </ligand>
</feature>
<feature type="binding site" evidence="1">
    <location>
        <position position="12"/>
    </location>
    <ligand>
        <name>ATP</name>
        <dbReference type="ChEBI" id="CHEBI:30616"/>
    </ligand>
</feature>
<feature type="binding site" evidence="1">
    <location>
        <position position="12"/>
    </location>
    <ligand>
        <name>sn-glycerol 3-phosphate</name>
        <dbReference type="ChEBI" id="CHEBI:57597"/>
    </ligand>
</feature>
<feature type="binding site" evidence="1">
    <location>
        <position position="13"/>
    </location>
    <ligand>
        <name>ATP</name>
        <dbReference type="ChEBI" id="CHEBI:30616"/>
    </ligand>
</feature>
<feature type="binding site" evidence="1">
    <location>
        <position position="14"/>
    </location>
    <ligand>
        <name>ATP</name>
        <dbReference type="ChEBI" id="CHEBI:30616"/>
    </ligand>
</feature>
<feature type="binding site" evidence="1">
    <location>
        <position position="16"/>
    </location>
    <ligand>
        <name>ADP</name>
        <dbReference type="ChEBI" id="CHEBI:456216"/>
    </ligand>
</feature>
<feature type="binding site" evidence="1">
    <location>
        <position position="82"/>
    </location>
    <ligand>
        <name>glycerol</name>
        <dbReference type="ChEBI" id="CHEBI:17754"/>
    </ligand>
</feature>
<feature type="binding site" evidence="1">
    <location>
        <position position="82"/>
    </location>
    <ligand>
        <name>sn-glycerol 3-phosphate</name>
        <dbReference type="ChEBI" id="CHEBI:57597"/>
    </ligand>
</feature>
<feature type="binding site" evidence="1">
    <location>
        <position position="83"/>
    </location>
    <ligand>
        <name>glycerol</name>
        <dbReference type="ChEBI" id="CHEBI:17754"/>
    </ligand>
</feature>
<feature type="binding site" evidence="1">
    <location>
        <position position="83"/>
    </location>
    <ligand>
        <name>sn-glycerol 3-phosphate</name>
        <dbReference type="ChEBI" id="CHEBI:57597"/>
    </ligand>
</feature>
<feature type="binding site" evidence="1">
    <location>
        <position position="134"/>
    </location>
    <ligand>
        <name>glycerol</name>
        <dbReference type="ChEBI" id="CHEBI:17754"/>
    </ligand>
</feature>
<feature type="binding site" evidence="1">
    <location>
        <position position="134"/>
    </location>
    <ligand>
        <name>sn-glycerol 3-phosphate</name>
        <dbReference type="ChEBI" id="CHEBI:57597"/>
    </ligand>
</feature>
<feature type="binding site" evidence="1">
    <location>
        <position position="244"/>
    </location>
    <ligand>
        <name>glycerol</name>
        <dbReference type="ChEBI" id="CHEBI:17754"/>
    </ligand>
</feature>
<feature type="binding site" evidence="1">
    <location>
        <position position="244"/>
    </location>
    <ligand>
        <name>sn-glycerol 3-phosphate</name>
        <dbReference type="ChEBI" id="CHEBI:57597"/>
    </ligand>
</feature>
<feature type="binding site" evidence="1">
    <location>
        <position position="245"/>
    </location>
    <ligand>
        <name>glycerol</name>
        <dbReference type="ChEBI" id="CHEBI:17754"/>
    </ligand>
</feature>
<feature type="binding site" evidence="1">
    <location>
        <position position="266"/>
    </location>
    <ligand>
        <name>ADP</name>
        <dbReference type="ChEBI" id="CHEBI:456216"/>
    </ligand>
</feature>
<feature type="binding site" evidence="1">
    <location>
        <position position="266"/>
    </location>
    <ligand>
        <name>ATP</name>
        <dbReference type="ChEBI" id="CHEBI:30616"/>
    </ligand>
</feature>
<feature type="binding site" evidence="1">
    <location>
        <position position="309"/>
    </location>
    <ligand>
        <name>ADP</name>
        <dbReference type="ChEBI" id="CHEBI:456216"/>
    </ligand>
</feature>
<feature type="binding site" evidence="1">
    <location>
        <position position="309"/>
    </location>
    <ligand>
        <name>ATP</name>
        <dbReference type="ChEBI" id="CHEBI:30616"/>
    </ligand>
</feature>
<feature type="binding site" evidence="1">
    <location>
        <position position="313"/>
    </location>
    <ligand>
        <name>ATP</name>
        <dbReference type="ChEBI" id="CHEBI:30616"/>
    </ligand>
</feature>
<feature type="binding site" evidence="1">
    <location>
        <position position="410"/>
    </location>
    <ligand>
        <name>ADP</name>
        <dbReference type="ChEBI" id="CHEBI:456216"/>
    </ligand>
</feature>
<feature type="binding site" evidence="1">
    <location>
        <position position="410"/>
    </location>
    <ligand>
        <name>ATP</name>
        <dbReference type="ChEBI" id="CHEBI:30616"/>
    </ligand>
</feature>
<feature type="binding site" evidence="1">
    <location>
        <position position="414"/>
    </location>
    <ligand>
        <name>ADP</name>
        <dbReference type="ChEBI" id="CHEBI:456216"/>
    </ligand>
</feature>
<feature type="modified residue" description="Phosphohistidine; by HPr" evidence="1">
    <location>
        <position position="230"/>
    </location>
</feature>
<proteinExistence type="inferred from homology"/>
<protein>
    <recommendedName>
        <fullName evidence="1">Glycerol kinase</fullName>
        <ecNumber evidence="1">2.7.1.30</ecNumber>
    </recommendedName>
    <alternativeName>
        <fullName evidence="1">ATP:glycerol 3-phosphotransferase</fullName>
    </alternativeName>
    <alternativeName>
        <fullName evidence="1">Glycerokinase</fullName>
        <shortName evidence="1">GK</shortName>
    </alternativeName>
</protein>
<name>GLPK_BACAN</name>
<keyword id="KW-0067">ATP-binding</keyword>
<keyword id="KW-0319">Glycerol metabolism</keyword>
<keyword id="KW-0418">Kinase</keyword>
<keyword id="KW-0547">Nucleotide-binding</keyword>
<keyword id="KW-0597">Phosphoprotein</keyword>
<keyword id="KW-1185">Reference proteome</keyword>
<keyword id="KW-0808">Transferase</keyword>
<organism>
    <name type="scientific">Bacillus anthracis</name>
    <dbReference type="NCBI Taxonomy" id="1392"/>
    <lineage>
        <taxon>Bacteria</taxon>
        <taxon>Bacillati</taxon>
        <taxon>Bacillota</taxon>
        <taxon>Bacilli</taxon>
        <taxon>Bacillales</taxon>
        <taxon>Bacillaceae</taxon>
        <taxon>Bacillus</taxon>
        <taxon>Bacillus cereus group</taxon>
    </lineage>
</organism>
<sequence length="496" mass="55057">MKKYILSLDQGTTSSRAILFNKKGEIVHSAQKEFTQHFPKPGWVEHNAQEIWGSILAVIATCLSEADVKPEQIAGIGITNQRETAVVWDKTTGKPIYNAIVWQSRQTAEICDELKEKGYSEMVREKTGLLIDAYFSGTKVKWILDNVEGAREKAENGDLLFGTIDTWLVWKLSGGKAHVTDYSNASRTLMFNIHDLQWDDELLDMLTVPKSMLPEVRPSSEVYGETIDYHFFGQNVPIAGVAGDQQAALFGQACFGEGMAKNTYGTGCFMLMNTGEKAVASEHGLLTTIAWGIDGKVNYALEGSIFVAGSAIQWLRDGMRMFKDASESEVYASRVESTDGVYVVPAFVGLGTPYWDSEVRGAMFGVTRGTTKEHFIRATLESLAYQIKDVLCAMEADSGIELKTLRVDGGAVKNNFLMKFQSDILDVPVERPVINETTALGAAYLAGLAVGYWKNQDEIKEQWHMDKRFEPTMEAETSEELYAGWKKAIEATKAFK</sequence>
<gene>
    <name evidence="1" type="primary">glpK</name>
    <name type="ordered locus">BA_1026</name>
    <name type="ordered locus">GBAA_1026</name>
    <name type="ordered locus">BAS0960</name>
</gene>